<proteinExistence type="evidence at protein level"/>
<reference key="1">
    <citation type="journal article" date="1993" name="Nucleic Acids Res.">
        <title>Cloning and regulation of the rat mdr2 gene.</title>
        <authorList>
            <person name="Brown P.C."/>
            <person name="Thorgeirsson S.S."/>
            <person name="Silverman J.A."/>
        </authorList>
    </citation>
    <scope>NUCLEOTIDE SEQUENCE [MRNA]</scope>
    <source>
        <strain>Fischer</strain>
    </source>
</reference>
<reference key="2">
    <citation type="journal article" date="1992" name="Biochim. Biophys. Acta">
        <title>Identification of distinct P-glycoprotein gene sequences in rat.</title>
        <authorList>
            <person name="Deuchars K.L."/>
            <person name="Duthie M."/>
            <person name="Ling V."/>
        </authorList>
    </citation>
    <scope>NUCLEOTIDE SEQUENCE [GENOMIC DNA] OF 1211-1278</scope>
    <source>
        <strain>Sprague-Dawley</strain>
        <tissue>Liver</tissue>
    </source>
</reference>
<reference key="3">
    <citation type="journal article" date="1994" name="Biochim. Biophys. Acta">
        <title>Isolation of rat pgp3 cDNA: evidence for gender and zonal regulation of expression in the liver.</title>
        <authorList>
            <person name="Furuya K.N."/>
            <person name="Gebhardt R."/>
            <person name="Schuetz E.G."/>
            <person name="Schuetz J.D."/>
        </authorList>
    </citation>
    <scope>TISSUE SPECIFICITY</scope>
</reference>
<reference key="4">
    <citation type="journal article" date="1998" name="Exp. Anim.">
        <title>Mapping of the genes for rat P-glycoprotein 1, 2, and 3 (Pgy1, Pgy2, and Pgy3) to chromosome 4.</title>
        <authorList>
            <person name="Moralejo D.H."/>
            <person name="Wei K."/>
            <person name="Wei S."/>
            <person name="Ogino T."/>
            <person name="Yamada T."/>
            <person name="Sogawa K."/>
            <person name="Hamakawa H."/>
            <person name="Szpirer C."/>
            <person name="Carbone C."/>
            <person name="Matsumoto K."/>
        </authorList>
    </citation>
    <scope>TISSUE SPECIFICITY</scope>
</reference>
<reference key="5">
    <citation type="journal article" date="2004" name="J. Biol. Chem.">
        <title>Identification of HAX-1 as a protein that binds bile salt export protein and regulates its abundance in the apical membrane of Madin-Darby canine kidney cells.</title>
        <authorList>
            <person name="Ortiz D.F."/>
            <person name="Moseley J."/>
            <person name="Calderon G."/>
            <person name="Swift A.L."/>
            <person name="Li S."/>
            <person name="Arias I.M."/>
        </authorList>
    </citation>
    <scope>INTERACTION WITH HAX1</scope>
    <scope>SUBCELLULAR LOCATION</scope>
    <scope>TISSUE SPECIFICITY</scope>
</reference>
<evidence type="ECO:0000250" key="1"/>
<evidence type="ECO:0000250" key="2">
    <source>
        <dbReference type="UniProtKB" id="P21439"/>
    </source>
</evidence>
<evidence type="ECO:0000250" key="3">
    <source>
        <dbReference type="UniProtKB" id="P21440"/>
    </source>
</evidence>
<evidence type="ECO:0000255" key="4"/>
<evidence type="ECO:0000255" key="5">
    <source>
        <dbReference type="PROSITE-ProRule" id="PRU00434"/>
    </source>
</evidence>
<evidence type="ECO:0000255" key="6">
    <source>
        <dbReference type="PROSITE-ProRule" id="PRU00441"/>
    </source>
</evidence>
<evidence type="ECO:0000269" key="7">
    <source>
    </source>
</evidence>
<evidence type="ECO:0000269" key="8">
    <source>
    </source>
</evidence>
<evidence type="ECO:0000269" key="9">
    <source>
    </source>
</evidence>
<evidence type="ECO:0000303" key="10">
    <source>
    </source>
</evidence>
<evidence type="ECO:0000303" key="11">
    <source>
    </source>
</evidence>
<evidence type="ECO:0000303" key="12">
    <source>
    </source>
</evidence>
<evidence type="ECO:0000305" key="13"/>
<evidence type="ECO:0000312" key="14">
    <source>
        <dbReference type="RGD" id="620248"/>
    </source>
</evidence>
<protein>
    <recommendedName>
        <fullName evidence="13">Phosphatidylcholine translocator ABCB4</fullName>
        <ecNumber evidence="3">7.6.2.1</ecNumber>
    </recommendedName>
    <alternativeName>
        <fullName evidence="14">ATP-binding cassette sub-family B member 4</fullName>
    </alternativeName>
    <alternativeName>
        <fullName evidence="12">Multidrug resistance protein 2</fullName>
    </alternativeName>
    <alternativeName>
        <fullName evidence="2">Multidrug resistance protein 3</fullName>
    </alternativeName>
    <alternativeName>
        <fullName evidence="10">P-glycoprotein 2</fullName>
    </alternativeName>
    <alternativeName>
        <fullName evidence="11">P-glycoprotein 3</fullName>
    </alternativeName>
</protein>
<sequence length="1278" mass="140655">MDLEAARNGTARRLDGDFELGSISNQSREKKKKVNLIGPLTLFRYSDWQDKLFMLLGTAMAIAHGSGLPLMMIVFGEMTDKFVDNAGNFSLPVNFSLSMLNPGRILEEEMTRYAYYYSGLGGGVLLAAYIQVSFWTLAAGRQIRKIRQKFFHAILRQEMGWFDIKGTTELNTRLTDDISKISEGIGDKVGMFFQAIATFFAGFIVGFIRGWKLTLVIMAITAILGLSTAVWAKILSTFSDKELAAYAKAGAVAEEALGAIRTVIAFGGQNKELERYQKHLENAKKIGIKKAISANISMGIAFLLIYASYALAFWYGSTLVISKEYTIGNAMTVFFSILIGAFSVGQAAPCIDAFPNARGAAYVIFDIIDNNPKIDSFSERGHKPDSIKGNLEFSDVHFSYPSRANIKILKGLNLKVKSGQTVALVGNSGCGKSTTVQLLQRLYDPTEGTISIDGQDIRNFNVRCLREFIGVVSQEPVLFSTTIAENIRYGRGNVTMDEIKKAVKEANAYDFIMKLPQKFDTLVGDRGAQLSGGQKQRIAIARALVRNPKILLLDEATSALDTESEAEVQAALDKAREGRTTIVIAHRLSTVRNADVIAGFEDGVIVEQGSHSELIKKEGIYFRLVNMQTSGSQILSEEFEVELSDEKAAGGVAPNGWKARIFRNSTKKSLKSSRAHQNRLDVETNELDANVPPVSFLKVLRLNKTEWPYFVVGTLCAIANGALQPAFSIILSEMIAIFGPGDDTVKQQKCNMFSLVFLGLGVHSFFTFFLQGFTFGKAGEILTTRLRSMAFKAMLRQDMSWFDDHKNSTGALSTRLATDAAQVQGATGTRLALIAQNTANLGTGIIISFIYGWQLTLLLLSVVPFIAVAGIVEMKMLAGNAKRDKKEMEAAGKIATEAIENIRTVVSLTQERKFESMYVEKLHGPYRNSVRKAHIYGITFSISQAFMYFSYAGCFRFGSYLIVNGHMRFKDVILVFSAIVLGAVALGHASSFAPDYAKAKLSAAYLFSLFERQPLIDSYSREGMWPDKFEGSVTFNEVVFNYPTRANVPVLQGLSLEVKKGQTLALVGSSGCGKSTVVQLLERFYDPMAGTVLLDGQEAKKLNVQWLRAQLGIVSQEPILFDCSIAKNIAYGDNSRVVSQDEIVRAAKEANIHPFIETLPQKYETRVGDKGTQLSGGQKQRIAIARALIRQPRVLLLDEATSALDTESEKVVQEALDKAREGRTCIVIAHRLSTIQNADLIVVIDNGKVKEHGTHQQLLAQKGIYFSMVNIQAGTQNL</sequence>
<accession>Q08201</accession>
<accession>Q78E07</accession>
<organism>
    <name type="scientific">Rattus norvegicus</name>
    <name type="common">Rat</name>
    <dbReference type="NCBI Taxonomy" id="10116"/>
    <lineage>
        <taxon>Eukaryota</taxon>
        <taxon>Metazoa</taxon>
        <taxon>Chordata</taxon>
        <taxon>Craniata</taxon>
        <taxon>Vertebrata</taxon>
        <taxon>Euteleostomi</taxon>
        <taxon>Mammalia</taxon>
        <taxon>Eutheria</taxon>
        <taxon>Euarchontoglires</taxon>
        <taxon>Glires</taxon>
        <taxon>Rodentia</taxon>
        <taxon>Myomorpha</taxon>
        <taxon>Muroidea</taxon>
        <taxon>Muridae</taxon>
        <taxon>Murinae</taxon>
        <taxon>Rattus</taxon>
    </lineage>
</organism>
<dbReference type="EC" id="7.6.2.1" evidence="3"/>
<dbReference type="EMBL" id="L15079">
    <property type="protein sequence ID" value="AAA02937.1"/>
    <property type="molecule type" value="mRNA"/>
</dbReference>
<dbReference type="EMBL" id="X61105">
    <property type="protein sequence ID" value="CAA43417.1"/>
    <property type="molecule type" value="Genomic_DNA"/>
</dbReference>
<dbReference type="PIR" id="S41646">
    <property type="entry name" value="S41646"/>
</dbReference>
<dbReference type="RefSeq" id="NP_036822.1">
    <property type="nucleotide sequence ID" value="NM_012690.2"/>
</dbReference>
<dbReference type="SMR" id="Q08201"/>
<dbReference type="FunCoup" id="Q08201">
    <property type="interactions" value="87"/>
</dbReference>
<dbReference type="IntAct" id="Q08201">
    <property type="interactions" value="1"/>
</dbReference>
<dbReference type="STRING" id="10116.ENSRNOP00000042556"/>
<dbReference type="ChEMBL" id="CHEMBL2073706"/>
<dbReference type="GlyCosmos" id="Q08201">
    <property type="glycosylation" value="2 sites, No reported glycans"/>
</dbReference>
<dbReference type="GlyGen" id="Q08201">
    <property type="glycosylation" value="2 sites"/>
</dbReference>
<dbReference type="PhosphoSitePlus" id="Q08201"/>
<dbReference type="PaxDb" id="10116-ENSRNOP00000042556"/>
<dbReference type="GeneID" id="24891"/>
<dbReference type="KEGG" id="rno:24891"/>
<dbReference type="AGR" id="RGD:620248"/>
<dbReference type="CTD" id="5244"/>
<dbReference type="RGD" id="620248">
    <property type="gene designation" value="Abcb4"/>
</dbReference>
<dbReference type="eggNOG" id="KOG0055">
    <property type="taxonomic scope" value="Eukaryota"/>
</dbReference>
<dbReference type="InParanoid" id="Q08201"/>
<dbReference type="OrthoDB" id="36141at9989"/>
<dbReference type="PhylomeDB" id="Q08201"/>
<dbReference type="BRENDA" id="7.6.2.2">
    <property type="organism ID" value="5301"/>
</dbReference>
<dbReference type="Reactome" id="R-RNO-382556">
    <property type="pathway name" value="ABC-family proteins mediated transport"/>
</dbReference>
<dbReference type="PRO" id="PR:Q08201"/>
<dbReference type="Proteomes" id="UP000002494">
    <property type="component" value="Unplaced"/>
</dbReference>
<dbReference type="GO" id="GO:0016324">
    <property type="term" value="C:apical plasma membrane"/>
    <property type="evidence" value="ECO:0000314"/>
    <property type="project" value="RGD"/>
</dbReference>
<dbReference type="GO" id="GO:0030136">
    <property type="term" value="C:clathrin-coated vesicle"/>
    <property type="evidence" value="ECO:0007669"/>
    <property type="project" value="UniProtKB-SubCell"/>
</dbReference>
<dbReference type="GO" id="GO:0005737">
    <property type="term" value="C:cytoplasm"/>
    <property type="evidence" value="ECO:0000266"/>
    <property type="project" value="RGD"/>
</dbReference>
<dbReference type="GO" id="GO:0000139">
    <property type="term" value="C:Golgi membrane"/>
    <property type="evidence" value="ECO:0000314"/>
    <property type="project" value="RGD"/>
</dbReference>
<dbReference type="GO" id="GO:0046581">
    <property type="term" value="C:intercellular canaliculus"/>
    <property type="evidence" value="ECO:0000266"/>
    <property type="project" value="RGD"/>
</dbReference>
<dbReference type="GO" id="GO:0016020">
    <property type="term" value="C:membrane"/>
    <property type="evidence" value="ECO:0000266"/>
    <property type="project" value="RGD"/>
</dbReference>
<dbReference type="GO" id="GO:0045121">
    <property type="term" value="C:membrane raft"/>
    <property type="evidence" value="ECO:0007669"/>
    <property type="project" value="UniProtKB-SubCell"/>
</dbReference>
<dbReference type="GO" id="GO:0005886">
    <property type="term" value="C:plasma membrane"/>
    <property type="evidence" value="ECO:0000266"/>
    <property type="project" value="RGD"/>
</dbReference>
<dbReference type="GO" id="GO:0140359">
    <property type="term" value="F:ABC-type transporter activity"/>
    <property type="evidence" value="ECO:0007669"/>
    <property type="project" value="InterPro"/>
</dbReference>
<dbReference type="GO" id="GO:0005524">
    <property type="term" value="F:ATP binding"/>
    <property type="evidence" value="ECO:0007669"/>
    <property type="project" value="UniProtKB-KW"/>
</dbReference>
<dbReference type="GO" id="GO:0016887">
    <property type="term" value="F:ATP hydrolysis activity"/>
    <property type="evidence" value="ECO:0007669"/>
    <property type="project" value="InterPro"/>
</dbReference>
<dbReference type="GO" id="GO:0042626">
    <property type="term" value="F:ATPase-coupled transmembrane transporter activity"/>
    <property type="evidence" value="ECO:0000250"/>
    <property type="project" value="UniProtKB"/>
</dbReference>
<dbReference type="GO" id="GO:0090554">
    <property type="term" value="F:phosphatidylcholine floppase activity"/>
    <property type="evidence" value="ECO:0000250"/>
    <property type="project" value="UniProtKB"/>
</dbReference>
<dbReference type="GO" id="GO:0032782">
    <property type="term" value="P:bile acid secretion"/>
    <property type="evidence" value="ECO:0000250"/>
    <property type="project" value="UniProtKB"/>
</dbReference>
<dbReference type="GO" id="GO:1903413">
    <property type="term" value="P:cellular response to bile acid"/>
    <property type="evidence" value="ECO:0000250"/>
    <property type="project" value="UniProtKB"/>
</dbReference>
<dbReference type="GO" id="GO:0055088">
    <property type="term" value="P:lipid homeostasis"/>
    <property type="evidence" value="ECO:0000250"/>
    <property type="project" value="UniProtKB"/>
</dbReference>
<dbReference type="GO" id="GO:0045332">
    <property type="term" value="P:phospholipid translocation"/>
    <property type="evidence" value="ECO:0000266"/>
    <property type="project" value="RGD"/>
</dbReference>
<dbReference type="GO" id="GO:0032376">
    <property type="term" value="P:positive regulation of cholesterol transport"/>
    <property type="evidence" value="ECO:0000250"/>
    <property type="project" value="UniProtKB"/>
</dbReference>
<dbReference type="GO" id="GO:0061092">
    <property type="term" value="P:positive regulation of phospholipid translocation"/>
    <property type="evidence" value="ECO:0000250"/>
    <property type="project" value="UniProtKB"/>
</dbReference>
<dbReference type="GO" id="GO:2001140">
    <property type="term" value="P:positive regulation of phospholipid transport"/>
    <property type="evidence" value="ECO:0000250"/>
    <property type="project" value="UniProtKB"/>
</dbReference>
<dbReference type="GO" id="GO:1901557">
    <property type="term" value="P:response to fenofibrate"/>
    <property type="evidence" value="ECO:0000250"/>
    <property type="project" value="UniProtKB"/>
</dbReference>
<dbReference type="GO" id="GO:0051384">
    <property type="term" value="P:response to glucocorticoid"/>
    <property type="evidence" value="ECO:0000270"/>
    <property type="project" value="RGD"/>
</dbReference>
<dbReference type="GO" id="GO:0009410">
    <property type="term" value="P:response to xenobiotic stimulus"/>
    <property type="evidence" value="ECO:0000270"/>
    <property type="project" value="RGD"/>
</dbReference>
<dbReference type="CDD" id="cd18578">
    <property type="entry name" value="ABC_6TM_Pgp_ABCB1_D2_like"/>
    <property type="match status" value="1"/>
</dbReference>
<dbReference type="CDD" id="cd03249">
    <property type="entry name" value="ABC_MTABC3_MDL1_MDL2"/>
    <property type="match status" value="2"/>
</dbReference>
<dbReference type="FunFam" id="1.20.1560.10:FF:000018">
    <property type="entry name" value="ATP-binding cassette subfamily B member 11"/>
    <property type="match status" value="1"/>
</dbReference>
<dbReference type="FunFam" id="1.20.1560.10:FF:000043">
    <property type="entry name" value="Multidrug resistance protein 1A"/>
    <property type="match status" value="1"/>
</dbReference>
<dbReference type="FunFam" id="3.40.50.300:FF:000479">
    <property type="entry name" value="Multidrug resistance protein 1A"/>
    <property type="match status" value="2"/>
</dbReference>
<dbReference type="FunFam" id="1.20.1560.10:FF:000083">
    <property type="entry name" value="phosphatidylcholine translocator ABCB4 isoform X7"/>
    <property type="match status" value="1"/>
</dbReference>
<dbReference type="Gene3D" id="1.20.1560.10">
    <property type="entry name" value="ABC transporter type 1, transmembrane domain"/>
    <property type="match status" value="3"/>
</dbReference>
<dbReference type="Gene3D" id="3.40.50.300">
    <property type="entry name" value="P-loop containing nucleotide triphosphate hydrolases"/>
    <property type="match status" value="3"/>
</dbReference>
<dbReference type="InterPro" id="IPR003593">
    <property type="entry name" value="AAA+_ATPase"/>
</dbReference>
<dbReference type="InterPro" id="IPR011527">
    <property type="entry name" value="ABC1_TM_dom"/>
</dbReference>
<dbReference type="InterPro" id="IPR036640">
    <property type="entry name" value="ABC1_TM_sf"/>
</dbReference>
<dbReference type="InterPro" id="IPR003439">
    <property type="entry name" value="ABC_transporter-like_ATP-bd"/>
</dbReference>
<dbReference type="InterPro" id="IPR017871">
    <property type="entry name" value="ABC_transporter-like_CS"/>
</dbReference>
<dbReference type="InterPro" id="IPR027417">
    <property type="entry name" value="P-loop_NTPase"/>
</dbReference>
<dbReference type="InterPro" id="IPR039421">
    <property type="entry name" value="Type_1_exporter"/>
</dbReference>
<dbReference type="PANTHER" id="PTHR43394:SF28">
    <property type="entry name" value="ATP-BINDING CASSETTE SUBFAMILY B MEMBER 1"/>
    <property type="match status" value="1"/>
</dbReference>
<dbReference type="PANTHER" id="PTHR43394">
    <property type="entry name" value="ATP-DEPENDENT PERMEASE MDL1, MITOCHONDRIAL"/>
    <property type="match status" value="1"/>
</dbReference>
<dbReference type="Pfam" id="PF00664">
    <property type="entry name" value="ABC_membrane"/>
    <property type="match status" value="2"/>
</dbReference>
<dbReference type="Pfam" id="PF00005">
    <property type="entry name" value="ABC_tran"/>
    <property type="match status" value="2"/>
</dbReference>
<dbReference type="SMART" id="SM00382">
    <property type="entry name" value="AAA"/>
    <property type="match status" value="2"/>
</dbReference>
<dbReference type="SUPFAM" id="SSF90123">
    <property type="entry name" value="ABC transporter transmembrane region"/>
    <property type="match status" value="2"/>
</dbReference>
<dbReference type="SUPFAM" id="SSF52540">
    <property type="entry name" value="P-loop containing nucleoside triphosphate hydrolases"/>
    <property type="match status" value="2"/>
</dbReference>
<dbReference type="PROSITE" id="PS50929">
    <property type="entry name" value="ABC_TM1F"/>
    <property type="match status" value="2"/>
</dbReference>
<dbReference type="PROSITE" id="PS00211">
    <property type="entry name" value="ABC_TRANSPORTER_1"/>
    <property type="match status" value="2"/>
</dbReference>
<dbReference type="PROSITE" id="PS50893">
    <property type="entry name" value="ABC_TRANSPORTER_2"/>
    <property type="match status" value="2"/>
</dbReference>
<keyword id="KW-0067">ATP-binding</keyword>
<keyword id="KW-1003">Cell membrane</keyword>
<keyword id="KW-0963">Cytoplasm</keyword>
<keyword id="KW-0968">Cytoplasmic vesicle</keyword>
<keyword id="KW-0325">Glycoprotein</keyword>
<keyword id="KW-0445">Lipid transport</keyword>
<keyword id="KW-0472">Membrane</keyword>
<keyword id="KW-0547">Nucleotide-binding</keyword>
<keyword id="KW-0597">Phosphoprotein</keyword>
<keyword id="KW-1185">Reference proteome</keyword>
<keyword id="KW-0677">Repeat</keyword>
<keyword id="KW-1278">Translocase</keyword>
<keyword id="KW-0812">Transmembrane</keyword>
<keyword id="KW-1133">Transmembrane helix</keyword>
<keyword id="KW-0813">Transport</keyword>
<name>MDR3_RAT</name>
<feature type="chain" id="PRO_0000093338" description="Phosphatidylcholine translocator ABCB4">
    <location>
        <begin position="1"/>
        <end position="1278"/>
    </location>
</feature>
<feature type="topological domain" description="Cytoplasmic" evidence="1">
    <location>
        <begin position="1"/>
        <end position="47"/>
    </location>
</feature>
<feature type="transmembrane region" description="Helical" evidence="6">
    <location>
        <begin position="48"/>
        <end position="70"/>
    </location>
</feature>
<feature type="topological domain" description="Extracellular" evidence="1">
    <location>
        <begin position="71"/>
        <end position="115"/>
    </location>
</feature>
<feature type="transmembrane region" description="Helical" evidence="6">
    <location>
        <begin position="116"/>
        <end position="136"/>
    </location>
</feature>
<feature type="topological domain" description="Cytoplasmic" evidence="1">
    <location>
        <begin position="137"/>
        <end position="185"/>
    </location>
</feature>
<feature type="transmembrane region" description="Helical" evidence="6">
    <location>
        <begin position="186"/>
        <end position="207"/>
    </location>
</feature>
<feature type="topological domain" description="Extracellular" evidence="1">
    <location>
        <begin position="208"/>
        <end position="214"/>
    </location>
</feature>
<feature type="transmembrane region" description="Helical" evidence="6">
    <location>
        <begin position="215"/>
        <end position="235"/>
    </location>
</feature>
<feature type="topological domain" description="Cytoplasmic" evidence="1">
    <location>
        <begin position="236"/>
        <end position="293"/>
    </location>
</feature>
<feature type="transmembrane region" description="Helical" evidence="6">
    <location>
        <begin position="294"/>
        <end position="315"/>
    </location>
</feature>
<feature type="topological domain" description="Extracellular" evidence="1">
    <location>
        <begin position="316"/>
        <end position="329"/>
    </location>
</feature>
<feature type="transmembrane region" description="Helical" evidence="6">
    <location>
        <begin position="330"/>
        <end position="351"/>
    </location>
</feature>
<feature type="topological domain" description="Cytoplasmic" evidence="1">
    <location>
        <begin position="352"/>
        <end position="710"/>
    </location>
</feature>
<feature type="transmembrane region" description="Helical" evidence="6">
    <location>
        <begin position="711"/>
        <end position="731"/>
    </location>
</feature>
<feature type="topological domain" description="Extracellular" evidence="1">
    <location>
        <begin position="732"/>
        <end position="754"/>
    </location>
</feature>
<feature type="transmembrane region" description="Helical" evidence="6">
    <location>
        <begin position="755"/>
        <end position="775"/>
    </location>
</feature>
<feature type="topological domain" description="Cytoplasmic" evidence="1">
    <location>
        <begin position="776"/>
        <end position="830"/>
    </location>
</feature>
<feature type="transmembrane region" description="Helical" evidence="6">
    <location>
        <begin position="831"/>
        <end position="851"/>
    </location>
</feature>
<feature type="topological domain" description="Extracellular" evidence="1">
    <location>
        <position position="852"/>
    </location>
</feature>
<feature type="transmembrane region" description="Helical" evidence="6">
    <location>
        <begin position="853"/>
        <end position="872"/>
    </location>
</feature>
<feature type="topological domain" description="Cytoplasmic" evidence="1">
    <location>
        <begin position="873"/>
        <end position="932"/>
    </location>
</feature>
<feature type="transmembrane region" description="Helical" evidence="6">
    <location>
        <begin position="933"/>
        <end position="955"/>
    </location>
</feature>
<feature type="topological domain" description="Extracellular" evidence="1">
    <location>
        <begin position="956"/>
        <end position="971"/>
    </location>
</feature>
<feature type="transmembrane region" description="Helical" evidence="6">
    <location>
        <begin position="972"/>
        <end position="993"/>
    </location>
</feature>
<feature type="topological domain" description="Cytoplasmic" evidence="1">
    <location>
        <begin position="994"/>
        <end position="1278"/>
    </location>
</feature>
<feature type="domain" description="ABC transmembrane type-1 1" evidence="6">
    <location>
        <begin position="54"/>
        <end position="356"/>
    </location>
</feature>
<feature type="domain" description="ABC transporter 1" evidence="5">
    <location>
        <begin position="391"/>
        <end position="627"/>
    </location>
</feature>
<feature type="domain" description="ABC transmembrane type-1 2" evidence="6">
    <location>
        <begin position="710"/>
        <end position="998"/>
    </location>
</feature>
<feature type="domain" description="ABC transporter 2" evidence="5">
    <location>
        <begin position="1033"/>
        <end position="1271"/>
    </location>
</feature>
<feature type="region of interest" description="Interaction with HAX1" evidence="8">
    <location>
        <begin position="622"/>
        <end position="646"/>
    </location>
</feature>
<feature type="binding site" evidence="2">
    <location>
        <position position="403"/>
    </location>
    <ligand>
        <name>ATP</name>
        <dbReference type="ChEBI" id="CHEBI:30616"/>
        <label>1</label>
    </ligand>
</feature>
<feature type="binding site" evidence="2 5">
    <location>
        <begin position="429"/>
        <end position="434"/>
    </location>
    <ligand>
        <name>ATP</name>
        <dbReference type="ChEBI" id="CHEBI:30616"/>
        <label>1</label>
    </ligand>
</feature>
<feature type="binding site" evidence="2">
    <location>
        <position position="474"/>
    </location>
    <ligand>
        <name>ATP</name>
        <dbReference type="ChEBI" id="CHEBI:30616"/>
        <label>1</label>
    </ligand>
</feature>
<feature type="binding site" evidence="2">
    <location>
        <position position="533"/>
    </location>
    <ligand>
        <name>ATP</name>
        <dbReference type="ChEBI" id="CHEBI:30616"/>
        <label>2</label>
    </ligand>
</feature>
<feature type="binding site" evidence="2">
    <location>
        <position position="1045"/>
    </location>
    <ligand>
        <name>ATP</name>
        <dbReference type="ChEBI" id="CHEBI:30616"/>
        <label>2</label>
    </ligand>
</feature>
<feature type="binding site" evidence="2 5">
    <location>
        <begin position="1070"/>
        <end position="1076"/>
    </location>
    <ligand>
        <name>ATP</name>
        <dbReference type="ChEBI" id="CHEBI:30616"/>
        <label>2</label>
    </ligand>
</feature>
<feature type="binding site" evidence="2">
    <location>
        <position position="1116"/>
    </location>
    <ligand>
        <name>ATP</name>
        <dbReference type="ChEBI" id="CHEBI:30616"/>
        <label>2</label>
    </ligand>
</feature>
<feature type="binding site" evidence="2 5">
    <location>
        <begin position="1176"/>
        <end position="1178"/>
    </location>
    <ligand>
        <name>ATP</name>
        <dbReference type="ChEBI" id="CHEBI:30616"/>
        <label>1</label>
    </ligand>
</feature>
<feature type="modified residue" description="Phosphoserine" evidence="3">
    <location>
        <position position="24"/>
    </location>
</feature>
<feature type="glycosylation site" description="N-linked (GlcNAc...) asparagine" evidence="4">
    <location>
        <position position="88"/>
    </location>
</feature>
<feature type="glycosylation site" description="N-linked (GlcNAc...) asparagine" evidence="4">
    <location>
        <position position="94"/>
    </location>
</feature>
<gene>
    <name evidence="14" type="primary">Abcb4</name>
    <name evidence="12" type="synonym">Mdr2</name>
    <name evidence="11" type="synonym">Pgp3</name>
    <name evidence="10" type="synonym">Pgy2</name>
</gene>
<comment type="function">
    <text evidence="2 3">Energy-dependent phospholipid efflux translocator that acts as a positive regulator of biliary lipid secretion. Functions as a floppase that translocates specifically phosphatidylcholine (PC) from the inner to the outer leaflet of the canalicular membrane bilayer into the canaliculi of hepatocytes. Translocation of PC makes the biliary phospholipids available for extraction into the canaliculi lumen by bile salt mixed micelles and therefore protects the biliary tree from the detergent activity of bile salts. Plays a role in the recruitment of phosphatidylcholine (PC), phosphatidylethanolamine (PE) and sphingomyelin (SM) molecules to nonraft membranes and to further enrichment of SM and cholesterol in raft membranes in hepatocytes. Required for proper phospholipid bile formation. Indirectly involved in cholesterol efflux activity from hepatocytes into the canalicular lumen in the presence of bile salts in an ATP-dependent manner. May promote biliary phospholipid secretion as canaliculi-containing vesicles from the canalicular plasma membrane. In cooperation with ATP8B1, functions to protect hepatocytes from the deleterious detergent activity of bile salts. Does not confer multidrug resistance.</text>
</comment>
<comment type="catalytic activity">
    <reaction evidence="3">
        <text>ATP + H2O + phospholipidSide 1 = ADP + phosphate + phospholipidSide 2.</text>
        <dbReference type="EC" id="7.6.2.1"/>
    </reaction>
</comment>
<comment type="catalytic activity">
    <reaction evidence="3">
        <text>a 1,2-diacyl-sn-glycero-3-phosphocholine(in) + ATP + H2O = a 1,2-diacyl-sn-glycero-3-phosphocholine(out) + ADP + phosphate + H(+)</text>
        <dbReference type="Rhea" id="RHEA:66272"/>
        <dbReference type="ChEBI" id="CHEBI:15377"/>
        <dbReference type="ChEBI" id="CHEBI:15378"/>
        <dbReference type="ChEBI" id="CHEBI:30616"/>
        <dbReference type="ChEBI" id="CHEBI:43474"/>
        <dbReference type="ChEBI" id="CHEBI:57643"/>
        <dbReference type="ChEBI" id="CHEBI:456216"/>
    </reaction>
    <physiologicalReaction direction="left-to-right" evidence="3">
        <dbReference type="Rhea" id="RHEA:66273"/>
    </physiologicalReaction>
</comment>
<comment type="catalytic activity">
    <reaction evidence="2">
        <text>a 1,2-diacyl-sn-glycero-3-phosphoethanolamine(in) + ATP + H2O = a 1,2-diacyl-sn-glycero-3-phosphoethanolamine(out) + ADP + phosphate + H(+)</text>
        <dbReference type="Rhea" id="RHEA:36439"/>
        <dbReference type="ChEBI" id="CHEBI:15377"/>
        <dbReference type="ChEBI" id="CHEBI:15378"/>
        <dbReference type="ChEBI" id="CHEBI:30616"/>
        <dbReference type="ChEBI" id="CHEBI:43474"/>
        <dbReference type="ChEBI" id="CHEBI:64612"/>
        <dbReference type="ChEBI" id="CHEBI:456216"/>
    </reaction>
    <physiologicalReaction direction="left-to-right" evidence="2">
        <dbReference type="Rhea" id="RHEA:36440"/>
    </physiologicalReaction>
</comment>
<comment type="catalytic activity">
    <reaction evidence="2">
        <text>a sphingomyelin(in) + ATP + H2O = a sphingomyelin(out) + ADP + phosphate + H(+)</text>
        <dbReference type="Rhea" id="RHEA:38903"/>
        <dbReference type="ChEBI" id="CHEBI:15377"/>
        <dbReference type="ChEBI" id="CHEBI:15378"/>
        <dbReference type="ChEBI" id="CHEBI:17636"/>
        <dbReference type="ChEBI" id="CHEBI:30616"/>
        <dbReference type="ChEBI" id="CHEBI:43474"/>
        <dbReference type="ChEBI" id="CHEBI:456216"/>
    </reaction>
    <physiologicalReaction direction="left-to-right" evidence="2">
        <dbReference type="Rhea" id="RHEA:38904"/>
    </physiologicalReaction>
</comment>
<comment type="activity regulation">
    <text evidence="2">Translocation activity is inhibited by the ATPase inhibitor vanadate and the calcium channel blocker verapamil. Translocation activity is enhanced by the addition of the bile salt taurocholate.</text>
</comment>
<comment type="subunit">
    <text evidence="2 8">Interacts with HAX1 (PubMed:15159385). May interact with RACK1 (By similarity).</text>
</comment>
<comment type="interaction">
    <interactant intactId="EBI-929988">
        <id>Q08201</id>
    </interactant>
    <interactant intactId="EBI-930005">
        <id>Q7TSE9</id>
        <label>Hax1</label>
    </interactant>
    <organismsDiffer>false</organismsDiffer>
    <experiments>3</experiments>
</comment>
<comment type="subcellular location">
    <subcellularLocation>
        <location evidence="2">Cell membrane</location>
        <topology evidence="6">Multi-pass membrane protein</topology>
    </subcellularLocation>
    <subcellularLocation>
        <location evidence="2">Apical cell membrane</location>
        <topology evidence="6">Multi-pass membrane protein</topology>
    </subcellularLocation>
    <subcellularLocation>
        <location evidence="2">Membrane raft</location>
    </subcellularLocation>
    <subcellularLocation>
        <location evidence="2">Cytoplasm</location>
    </subcellularLocation>
    <subcellularLocation>
        <location evidence="8">Cytoplasmic vesicle</location>
        <location evidence="8">Clathrin-coated vesicle</location>
    </subcellularLocation>
    <text evidence="2 3">Localized at the apical canalicular membrane of the epithelial cells lining the lumen of the bile canaliculi and biliary ductules. Localized preferentially in lipid nonraft domains of canalicular plasma membranes. Transported from the Golgi to the apical bile canalicular membrane in a RACK1-dependent manner. Redistributed into pseudocanaliculi formed between cells in a bezafibrate- or PPARA-dependent manner.</text>
</comment>
<comment type="tissue specificity">
    <text evidence="7 8 9">Expressed in the liver (PubMed:15159385). Expressed in hepatocytes (PubMed:10067174, PubMed:7948020).</text>
</comment>
<comment type="PTM">
    <text evidence="2">Phosphorylated. Phosphorylation is required for PC efflux activity. Phosphorylation occurs on serine and threonine residues in a protein kinase A- or C-dependent manner. May be phosphorylated on Thr-41 and Ser-46.</text>
</comment>
<comment type="PTM">
    <text evidence="2">Glycosylated.</text>
</comment>
<comment type="similarity">
    <text evidence="13">Belongs to the ABC transporter superfamily. ABCB family. Multidrug resistance exporter (TC 3.A.1.201) subfamily.</text>
</comment>